<name>SIM15_XENLA</name>
<keyword id="KW-0175">Coiled coil</keyword>
<keyword id="KW-0472">Membrane</keyword>
<keyword id="KW-1185">Reference proteome</keyword>
<keyword id="KW-0812">Transmembrane</keyword>
<keyword id="KW-1133">Transmembrane helix</keyword>
<accession>A9JTJ0</accession>
<gene>
    <name type="primary">smim15</name>
</gene>
<protein>
    <recommendedName>
        <fullName>Small integral membrane protein 15</fullName>
    </recommendedName>
</protein>
<dbReference type="EMBL" id="BC155360">
    <property type="protein sequence ID" value="AAI55361.1"/>
    <property type="molecule type" value="mRNA"/>
</dbReference>
<dbReference type="RefSeq" id="NP_001165264.1">
    <property type="nucleotide sequence ID" value="NM_001171793.1"/>
</dbReference>
<dbReference type="RefSeq" id="XP_018096459.1">
    <property type="nucleotide sequence ID" value="XM_018240970.1"/>
</dbReference>
<dbReference type="RefSeq" id="XP_018096460.1">
    <property type="nucleotide sequence ID" value="XM_018240971.1"/>
</dbReference>
<dbReference type="SMR" id="A9JTJ0"/>
<dbReference type="GeneID" id="100127278"/>
<dbReference type="KEGG" id="xla:100127278"/>
<dbReference type="AGR" id="Xenbase:XB-GENE-6485714"/>
<dbReference type="CTD" id="100127278"/>
<dbReference type="Xenbase" id="XB-GENE-6485714">
    <property type="gene designation" value="smim15.S"/>
</dbReference>
<dbReference type="OrthoDB" id="6282848at2759"/>
<dbReference type="Proteomes" id="UP000186698">
    <property type="component" value="Chromosome 1S"/>
</dbReference>
<dbReference type="Bgee" id="100127278">
    <property type="expression patterns" value="Expressed in internal ear and 20 other cell types or tissues"/>
</dbReference>
<dbReference type="GO" id="GO:0016020">
    <property type="term" value="C:membrane"/>
    <property type="evidence" value="ECO:0007669"/>
    <property type="project" value="UniProtKB-SubCell"/>
</dbReference>
<dbReference type="InterPro" id="IPR027877">
    <property type="entry name" value="Smim15"/>
</dbReference>
<dbReference type="PANTHER" id="PTHR28644">
    <property type="entry name" value="SMALL INTEGRAL MEMBRANE PROTEIN 15"/>
    <property type="match status" value="1"/>
</dbReference>
<dbReference type="PANTHER" id="PTHR28644:SF1">
    <property type="entry name" value="SMALL INTEGRAL MEMBRANE PROTEIN 15"/>
    <property type="match status" value="1"/>
</dbReference>
<dbReference type="Pfam" id="PF15086">
    <property type="entry name" value="UPF0542"/>
    <property type="match status" value="1"/>
</dbReference>
<evidence type="ECO:0000255" key="1"/>
<evidence type="ECO:0000256" key="2">
    <source>
        <dbReference type="SAM" id="MobiDB-lite"/>
    </source>
</evidence>
<evidence type="ECO:0000305" key="3"/>
<sequence>MIDTLKGWAEYLVEWAAKDPYGFLITVLLALTPLFLASAVLSWKMAKMIEAKERDQKKKQKRQENIAKAKRTKKD</sequence>
<comment type="subcellular location">
    <subcellularLocation>
        <location evidence="3">Membrane</location>
        <topology evidence="3">Single-pass membrane protein</topology>
    </subcellularLocation>
</comment>
<comment type="similarity">
    <text evidence="3">Belongs to the SMIM15 family.</text>
</comment>
<proteinExistence type="inferred from homology"/>
<organism>
    <name type="scientific">Xenopus laevis</name>
    <name type="common">African clawed frog</name>
    <dbReference type="NCBI Taxonomy" id="8355"/>
    <lineage>
        <taxon>Eukaryota</taxon>
        <taxon>Metazoa</taxon>
        <taxon>Chordata</taxon>
        <taxon>Craniata</taxon>
        <taxon>Vertebrata</taxon>
        <taxon>Euteleostomi</taxon>
        <taxon>Amphibia</taxon>
        <taxon>Batrachia</taxon>
        <taxon>Anura</taxon>
        <taxon>Pipoidea</taxon>
        <taxon>Pipidae</taxon>
        <taxon>Xenopodinae</taxon>
        <taxon>Xenopus</taxon>
        <taxon>Xenopus</taxon>
    </lineage>
</organism>
<reference key="1">
    <citation type="submission" date="2007-11" db="EMBL/GenBank/DDBJ databases">
        <authorList>
            <consortium name="NIH - Xenopus Gene Collection (XGC) project"/>
        </authorList>
    </citation>
    <scope>NUCLEOTIDE SEQUENCE [LARGE SCALE MRNA]</scope>
    <source>
        <tissue>Kidney</tissue>
    </source>
</reference>
<feature type="chain" id="PRO_0000326080" description="Small integral membrane protein 15">
    <location>
        <begin position="1"/>
        <end position="75"/>
    </location>
</feature>
<feature type="transmembrane region" description="Helical" evidence="1">
    <location>
        <begin position="21"/>
        <end position="41"/>
    </location>
</feature>
<feature type="region of interest" description="Disordered" evidence="2">
    <location>
        <begin position="52"/>
        <end position="75"/>
    </location>
</feature>
<feature type="coiled-coil region" evidence="1">
    <location>
        <begin position="49"/>
        <end position="75"/>
    </location>
</feature>
<feature type="compositionally biased region" description="Basic and acidic residues" evidence="2">
    <location>
        <begin position="52"/>
        <end position="67"/>
    </location>
</feature>